<comment type="function">
    <text evidence="1">ATP-dependent specificity component of the Clp protease. It directs the protease to specific substrates. Can perform chaperone functions in the absence of ClpP.</text>
</comment>
<comment type="subunit">
    <text evidence="1">Component of the ClpX-ClpP complex. Forms a hexameric ring that, in the presence of ATP, binds to fourteen ClpP subunits assembled into a disk-like structure with a central cavity, resembling the structure of eukaryotic proteasomes.</text>
</comment>
<comment type="similarity">
    <text evidence="1">Belongs to the ClpX chaperone family.</text>
</comment>
<accession>B5RPV8</accession>
<evidence type="ECO:0000255" key="1">
    <source>
        <dbReference type="HAMAP-Rule" id="MF_00175"/>
    </source>
</evidence>
<evidence type="ECO:0000255" key="2">
    <source>
        <dbReference type="PROSITE-ProRule" id="PRU01250"/>
    </source>
</evidence>
<feature type="chain" id="PRO_1000097925" description="ATP-dependent Clp protease ATP-binding subunit ClpX">
    <location>
        <begin position="1"/>
        <end position="429"/>
    </location>
</feature>
<feature type="domain" description="ClpX-type ZB" evidence="2">
    <location>
        <begin position="1"/>
        <end position="54"/>
    </location>
</feature>
<feature type="binding site" evidence="2">
    <location>
        <position position="12"/>
    </location>
    <ligand>
        <name>Zn(2+)</name>
        <dbReference type="ChEBI" id="CHEBI:29105"/>
    </ligand>
</feature>
<feature type="binding site" evidence="2">
    <location>
        <position position="15"/>
    </location>
    <ligand>
        <name>Zn(2+)</name>
        <dbReference type="ChEBI" id="CHEBI:29105"/>
    </ligand>
</feature>
<feature type="binding site" evidence="2">
    <location>
        <position position="35"/>
    </location>
    <ligand>
        <name>Zn(2+)</name>
        <dbReference type="ChEBI" id="CHEBI:29105"/>
    </ligand>
</feature>
<feature type="binding site" evidence="2">
    <location>
        <position position="38"/>
    </location>
    <ligand>
        <name>Zn(2+)</name>
        <dbReference type="ChEBI" id="CHEBI:29105"/>
    </ligand>
</feature>
<feature type="binding site" evidence="1">
    <location>
        <begin position="119"/>
        <end position="126"/>
    </location>
    <ligand>
        <name>ATP</name>
        <dbReference type="ChEBI" id="CHEBI:30616"/>
    </ligand>
</feature>
<name>CLPX_BORRA</name>
<dbReference type="EMBL" id="CP000993">
    <property type="protein sequence ID" value="ACH94842.1"/>
    <property type="molecule type" value="Genomic_DNA"/>
</dbReference>
<dbReference type="RefSeq" id="WP_012538357.1">
    <property type="nucleotide sequence ID" value="NZ_CP169983.1"/>
</dbReference>
<dbReference type="SMR" id="B5RPV8"/>
<dbReference type="KEGG" id="bre:BRE_618"/>
<dbReference type="HOGENOM" id="CLU_014218_8_2_12"/>
<dbReference type="Proteomes" id="UP000000612">
    <property type="component" value="Chromosome"/>
</dbReference>
<dbReference type="GO" id="GO:0009376">
    <property type="term" value="C:HslUV protease complex"/>
    <property type="evidence" value="ECO:0007669"/>
    <property type="project" value="TreeGrafter"/>
</dbReference>
<dbReference type="GO" id="GO:0005524">
    <property type="term" value="F:ATP binding"/>
    <property type="evidence" value="ECO:0007669"/>
    <property type="project" value="UniProtKB-UniRule"/>
</dbReference>
<dbReference type="GO" id="GO:0016887">
    <property type="term" value="F:ATP hydrolysis activity"/>
    <property type="evidence" value="ECO:0007669"/>
    <property type="project" value="InterPro"/>
</dbReference>
<dbReference type="GO" id="GO:0140662">
    <property type="term" value="F:ATP-dependent protein folding chaperone"/>
    <property type="evidence" value="ECO:0007669"/>
    <property type="project" value="InterPro"/>
</dbReference>
<dbReference type="GO" id="GO:0046983">
    <property type="term" value="F:protein dimerization activity"/>
    <property type="evidence" value="ECO:0007669"/>
    <property type="project" value="InterPro"/>
</dbReference>
<dbReference type="GO" id="GO:0051082">
    <property type="term" value="F:unfolded protein binding"/>
    <property type="evidence" value="ECO:0007669"/>
    <property type="project" value="UniProtKB-UniRule"/>
</dbReference>
<dbReference type="GO" id="GO:0008270">
    <property type="term" value="F:zinc ion binding"/>
    <property type="evidence" value="ECO:0007669"/>
    <property type="project" value="InterPro"/>
</dbReference>
<dbReference type="GO" id="GO:0051301">
    <property type="term" value="P:cell division"/>
    <property type="evidence" value="ECO:0007669"/>
    <property type="project" value="TreeGrafter"/>
</dbReference>
<dbReference type="GO" id="GO:0051603">
    <property type="term" value="P:proteolysis involved in protein catabolic process"/>
    <property type="evidence" value="ECO:0007669"/>
    <property type="project" value="TreeGrafter"/>
</dbReference>
<dbReference type="CDD" id="cd19497">
    <property type="entry name" value="RecA-like_ClpX"/>
    <property type="match status" value="1"/>
</dbReference>
<dbReference type="FunFam" id="1.10.8.60:FF:000002">
    <property type="entry name" value="ATP-dependent Clp protease ATP-binding subunit ClpX"/>
    <property type="match status" value="1"/>
</dbReference>
<dbReference type="FunFam" id="3.40.50.300:FF:000005">
    <property type="entry name" value="ATP-dependent Clp protease ATP-binding subunit ClpX"/>
    <property type="match status" value="1"/>
</dbReference>
<dbReference type="Gene3D" id="1.10.8.60">
    <property type="match status" value="1"/>
</dbReference>
<dbReference type="Gene3D" id="6.20.220.10">
    <property type="entry name" value="ClpX chaperone, C4-type zinc finger domain"/>
    <property type="match status" value="1"/>
</dbReference>
<dbReference type="Gene3D" id="3.40.50.300">
    <property type="entry name" value="P-loop containing nucleotide triphosphate hydrolases"/>
    <property type="match status" value="1"/>
</dbReference>
<dbReference type="HAMAP" id="MF_00175">
    <property type="entry name" value="ClpX"/>
    <property type="match status" value="1"/>
</dbReference>
<dbReference type="InterPro" id="IPR003593">
    <property type="entry name" value="AAA+_ATPase"/>
</dbReference>
<dbReference type="InterPro" id="IPR050052">
    <property type="entry name" value="ATP-dep_Clp_protease_ClpX"/>
</dbReference>
<dbReference type="InterPro" id="IPR003959">
    <property type="entry name" value="ATPase_AAA_core"/>
</dbReference>
<dbReference type="InterPro" id="IPR019489">
    <property type="entry name" value="Clp_ATPase_C"/>
</dbReference>
<dbReference type="InterPro" id="IPR004487">
    <property type="entry name" value="Clp_protease_ATP-bd_su_ClpX"/>
</dbReference>
<dbReference type="InterPro" id="IPR046425">
    <property type="entry name" value="ClpX_bact"/>
</dbReference>
<dbReference type="InterPro" id="IPR027417">
    <property type="entry name" value="P-loop_NTPase"/>
</dbReference>
<dbReference type="InterPro" id="IPR010603">
    <property type="entry name" value="Znf_CppX_C4"/>
</dbReference>
<dbReference type="InterPro" id="IPR038366">
    <property type="entry name" value="Znf_CppX_C4_sf"/>
</dbReference>
<dbReference type="NCBIfam" id="TIGR00382">
    <property type="entry name" value="clpX"/>
    <property type="match status" value="1"/>
</dbReference>
<dbReference type="NCBIfam" id="NF003745">
    <property type="entry name" value="PRK05342.1"/>
    <property type="match status" value="1"/>
</dbReference>
<dbReference type="PANTHER" id="PTHR48102:SF7">
    <property type="entry name" value="ATP-DEPENDENT CLP PROTEASE ATP-BINDING SUBUNIT CLPX-LIKE, MITOCHONDRIAL"/>
    <property type="match status" value="1"/>
</dbReference>
<dbReference type="PANTHER" id="PTHR48102">
    <property type="entry name" value="ATP-DEPENDENT CLP PROTEASE ATP-BINDING SUBUNIT CLPX-LIKE, MITOCHONDRIAL-RELATED"/>
    <property type="match status" value="1"/>
</dbReference>
<dbReference type="Pfam" id="PF07724">
    <property type="entry name" value="AAA_2"/>
    <property type="match status" value="1"/>
</dbReference>
<dbReference type="Pfam" id="PF10431">
    <property type="entry name" value="ClpB_D2-small"/>
    <property type="match status" value="1"/>
</dbReference>
<dbReference type="Pfam" id="PF06689">
    <property type="entry name" value="zf-C4_ClpX"/>
    <property type="match status" value="1"/>
</dbReference>
<dbReference type="SMART" id="SM00382">
    <property type="entry name" value="AAA"/>
    <property type="match status" value="1"/>
</dbReference>
<dbReference type="SMART" id="SM01086">
    <property type="entry name" value="ClpB_D2-small"/>
    <property type="match status" value="1"/>
</dbReference>
<dbReference type="SMART" id="SM00994">
    <property type="entry name" value="zf-C4_ClpX"/>
    <property type="match status" value="1"/>
</dbReference>
<dbReference type="SUPFAM" id="SSF52540">
    <property type="entry name" value="P-loop containing nucleoside triphosphate hydrolases"/>
    <property type="match status" value="1"/>
</dbReference>
<dbReference type="PROSITE" id="PS51902">
    <property type="entry name" value="CLPX_ZB"/>
    <property type="match status" value="1"/>
</dbReference>
<sequence>MARSKSQKIEGCSFCGRTRAEAEGKIISAKSVAICFECSKICHNLFKEESDKPASNKAPRGLPTPKQLKSHLDKYIIGQEDAKKVLSVAVYNHYKRIFKGSKRETGVELEKSNVLLVGPTGSGKTLLAKKLAAEMNVPFAIADATTLTEAGYVGEDVENILLKLIHAANGDVSFAERGIIYIDEIDKIAKKGENVSITRDVSGEGVQQSLLKIIEGTIANVPPRGGRKHPYEETIAINTHDILFICGGAFVGLENIIKKRINRSFIGFSSSSCKDTGGDNSLKYLEMEDLIKFGLIPEFVGRLPVHSYLDKLEKKDLMKILVEPENSIVRQYYHMFKMDNVDLLFEKDALDAIAEEAMLKNTGARGLRSILEELLKDVMFEIPSSKQIKKVIVTKDSVLNTNVEPLILTGRHVNKPWAKELYEINSKSN</sequence>
<organism>
    <name type="scientific">Borrelia recurrentis (strain A1)</name>
    <dbReference type="NCBI Taxonomy" id="412418"/>
    <lineage>
        <taxon>Bacteria</taxon>
        <taxon>Pseudomonadati</taxon>
        <taxon>Spirochaetota</taxon>
        <taxon>Spirochaetia</taxon>
        <taxon>Spirochaetales</taxon>
        <taxon>Borreliaceae</taxon>
        <taxon>Borrelia</taxon>
    </lineage>
</organism>
<protein>
    <recommendedName>
        <fullName evidence="1">ATP-dependent Clp protease ATP-binding subunit ClpX</fullName>
    </recommendedName>
</protein>
<reference key="1">
    <citation type="journal article" date="2008" name="PLoS Genet.">
        <title>The genome of Borrelia recurrentis, the agent of deadly louse-borne relapsing fever, is a degraded subset of tick-borne Borrelia duttonii.</title>
        <authorList>
            <person name="Lescot M."/>
            <person name="Audic S."/>
            <person name="Robert C."/>
            <person name="Nguyen T.T."/>
            <person name="Blanc G."/>
            <person name="Cutler S.J."/>
            <person name="Wincker P."/>
            <person name="Couloux A."/>
            <person name="Claverie J.-M."/>
            <person name="Raoult D."/>
            <person name="Drancourt M."/>
        </authorList>
    </citation>
    <scope>NUCLEOTIDE SEQUENCE [LARGE SCALE GENOMIC DNA]</scope>
    <source>
        <strain>A1</strain>
    </source>
</reference>
<gene>
    <name evidence="1" type="primary">clpX</name>
    <name type="ordered locus">BRE_618</name>
</gene>
<keyword id="KW-0067">ATP-binding</keyword>
<keyword id="KW-0143">Chaperone</keyword>
<keyword id="KW-0479">Metal-binding</keyword>
<keyword id="KW-0547">Nucleotide-binding</keyword>
<keyword id="KW-0862">Zinc</keyword>
<proteinExistence type="inferred from homology"/>